<protein>
    <recommendedName>
        <fullName>Uncharacterized 11.5 kDa protein in thcD 3'region</fullName>
    </recommendedName>
    <alternativeName>
        <fullName>ORF5</fullName>
    </alternativeName>
</protein>
<name>YTH5_RHOER</name>
<reference key="1">
    <citation type="journal article" date="1995" name="J. Bacteriol.">
        <title>Degradation of the thiocarbamate herbicide EPTC (S-ethyl dipropylcarbamothioate) and biosafening by Rhodococcus sp. strain NI86/21 involve an inducible cytochrome P-450 system and aldehyde dehydrogenase.</title>
        <authorList>
            <person name="Nagy I."/>
            <person name="Schoofs G."/>
            <person name="Compernolle F."/>
            <person name="Proost P."/>
            <person name="Vanderleyden J."/>
            <person name="de Mot R."/>
        </authorList>
    </citation>
    <scope>NUCLEOTIDE SEQUENCE [GENOMIC DNA]</scope>
    <source>
        <strain>NI86/21</strain>
    </source>
</reference>
<dbReference type="EMBL" id="U17130">
    <property type="protein sequence ID" value="AAC45753.1"/>
    <property type="molecule type" value="Genomic_DNA"/>
</dbReference>
<dbReference type="Gene3D" id="3.60.15.10">
    <property type="entry name" value="Ribonuclease Z/Hydroxyacylglutathione hydrolase-like"/>
    <property type="match status" value="1"/>
</dbReference>
<dbReference type="InterPro" id="IPR051453">
    <property type="entry name" value="MBL_Glyoxalase_II"/>
</dbReference>
<dbReference type="InterPro" id="IPR036866">
    <property type="entry name" value="RibonucZ/Hydroxyglut_hydro"/>
</dbReference>
<dbReference type="PANTHER" id="PTHR46233">
    <property type="entry name" value="HYDROXYACYLGLUTATHIONE HYDROLASE GLOC"/>
    <property type="match status" value="1"/>
</dbReference>
<dbReference type="PANTHER" id="PTHR46233:SF4">
    <property type="entry name" value="METALLO-BETA-LACTAMASE DOMAIN-CONTAINING PROTEIN"/>
    <property type="match status" value="1"/>
</dbReference>
<dbReference type="SUPFAM" id="SSF56281">
    <property type="entry name" value="Metallo-hydrolase/oxidoreductase"/>
    <property type="match status" value="1"/>
</dbReference>
<sequence>MRGRLRIERVVTDVGDRLVNVAICTHGHNDHVTVAPELAERLHALVPLHPGATTGRSYSDFPTTIGSIRDRLFALPEETLVHTGHGDGTTIGTEAPHLAEWIARGQ</sequence>
<accession>P43495</accession>
<feature type="chain" id="PRO_0000066526" description="Uncharacterized 11.5 kDa protein in thcD 3'region">
    <location>
        <begin position="1"/>
        <end position="106"/>
    </location>
</feature>
<proteinExistence type="predicted"/>
<organism>
    <name type="scientific">Rhodococcus erythropolis</name>
    <name type="common">Arthrobacter picolinophilus</name>
    <dbReference type="NCBI Taxonomy" id="1833"/>
    <lineage>
        <taxon>Bacteria</taxon>
        <taxon>Bacillati</taxon>
        <taxon>Actinomycetota</taxon>
        <taxon>Actinomycetes</taxon>
        <taxon>Mycobacteriales</taxon>
        <taxon>Nocardiaceae</taxon>
        <taxon>Rhodococcus</taxon>
        <taxon>Rhodococcus erythropolis group</taxon>
    </lineage>
</organism>